<organism>
    <name type="scientific">Mesorhizobium japonicum (strain LMG 29417 / CECT 9101 / MAFF 303099)</name>
    <name type="common">Mesorhizobium loti (strain MAFF 303099)</name>
    <dbReference type="NCBI Taxonomy" id="266835"/>
    <lineage>
        <taxon>Bacteria</taxon>
        <taxon>Pseudomonadati</taxon>
        <taxon>Pseudomonadota</taxon>
        <taxon>Alphaproteobacteria</taxon>
        <taxon>Hyphomicrobiales</taxon>
        <taxon>Phyllobacteriaceae</taxon>
        <taxon>Mesorhizobium</taxon>
    </lineage>
</organism>
<protein>
    <recommendedName>
        <fullName evidence="3">Histidinol dehydrogenase homolog 1</fullName>
        <ecNumber evidence="3">1.1.-.-</ecNumber>
    </recommendedName>
</protein>
<accession>Q988P7</accession>
<feature type="chain" id="PRO_0000135830" description="Histidinol dehydrogenase homolog 1">
    <location>
        <begin position="1"/>
        <end position="500"/>
    </location>
</feature>
<feature type="region of interest" description="Disordered" evidence="2">
    <location>
        <begin position="1"/>
        <end position="25"/>
    </location>
</feature>
<feature type="compositionally biased region" description="Basic residues" evidence="2">
    <location>
        <begin position="12"/>
        <end position="21"/>
    </location>
</feature>
<feature type="active site" description="Proton acceptor" evidence="1">
    <location>
        <position position="381"/>
    </location>
</feature>
<feature type="active site" description="Proton acceptor" evidence="1">
    <location>
        <position position="382"/>
    </location>
</feature>
<feature type="binding site" evidence="1">
    <location>
        <position position="313"/>
    </location>
    <ligand>
        <name>Zn(2+)</name>
        <dbReference type="ChEBI" id="CHEBI:29105"/>
    </ligand>
</feature>
<feature type="binding site" evidence="1">
    <location>
        <position position="316"/>
    </location>
    <ligand>
        <name>Zn(2+)</name>
        <dbReference type="ChEBI" id="CHEBI:29105"/>
    </ligand>
</feature>
<feature type="binding site" evidence="1">
    <location>
        <position position="415"/>
    </location>
    <ligand>
        <name>Zn(2+)</name>
        <dbReference type="ChEBI" id="CHEBI:29105"/>
    </ligand>
</feature>
<feature type="binding site" evidence="1">
    <location>
        <position position="475"/>
    </location>
    <ligand>
        <name>Zn(2+)</name>
        <dbReference type="ChEBI" id="CHEBI:29105"/>
    </ligand>
</feature>
<reference key="1">
    <citation type="journal article" date="2000" name="DNA Res.">
        <title>Complete genome structure of the nitrogen-fixing symbiotic bacterium Mesorhizobium loti.</title>
        <authorList>
            <person name="Kaneko T."/>
            <person name="Nakamura Y."/>
            <person name="Sato S."/>
            <person name="Asamizu E."/>
            <person name="Kato T."/>
            <person name="Sasamoto S."/>
            <person name="Watanabe A."/>
            <person name="Idesawa K."/>
            <person name="Ishikawa A."/>
            <person name="Kawashima K."/>
            <person name="Kimura T."/>
            <person name="Kishida Y."/>
            <person name="Kiyokawa C."/>
            <person name="Kohara M."/>
            <person name="Matsumoto M."/>
            <person name="Matsuno A."/>
            <person name="Mochizuki Y."/>
            <person name="Nakayama S."/>
            <person name="Nakazaki N."/>
            <person name="Shimpo S."/>
            <person name="Sugimoto M."/>
            <person name="Takeuchi C."/>
            <person name="Yamada M."/>
            <person name="Tabata S."/>
        </authorList>
    </citation>
    <scope>NUCLEOTIDE SEQUENCE [LARGE SCALE GENOMIC DNA]</scope>
    <source>
        <strain>LMG 29417 / CECT 9101 / MAFF 303099</strain>
    </source>
</reference>
<name>HSXH1_RHILO</name>
<evidence type="ECO:0000250" key="1">
    <source>
        <dbReference type="UniProtKB" id="P06988"/>
    </source>
</evidence>
<evidence type="ECO:0000256" key="2">
    <source>
        <dbReference type="SAM" id="MobiDB-lite"/>
    </source>
</evidence>
<evidence type="ECO:0000305" key="3"/>
<keyword id="KW-0479">Metal-binding</keyword>
<keyword id="KW-0560">Oxidoreductase</keyword>
<keyword id="KW-0862">Zinc</keyword>
<gene>
    <name type="ordered locus">mlr6649</name>
</gene>
<dbReference type="EC" id="1.1.-.-" evidence="3"/>
<dbReference type="EMBL" id="BA000012">
    <property type="protein sequence ID" value="BAB52900.1"/>
    <property type="molecule type" value="Genomic_DNA"/>
</dbReference>
<dbReference type="SMR" id="Q988P7"/>
<dbReference type="KEGG" id="mlo:mlr6649"/>
<dbReference type="eggNOG" id="COG0141">
    <property type="taxonomic scope" value="Bacteria"/>
</dbReference>
<dbReference type="HOGENOM" id="CLU_006732_3_3_5"/>
<dbReference type="Proteomes" id="UP000000552">
    <property type="component" value="Chromosome"/>
</dbReference>
<dbReference type="GO" id="GO:0005829">
    <property type="term" value="C:cytosol"/>
    <property type="evidence" value="ECO:0007669"/>
    <property type="project" value="TreeGrafter"/>
</dbReference>
<dbReference type="GO" id="GO:0004399">
    <property type="term" value="F:histidinol dehydrogenase activity"/>
    <property type="evidence" value="ECO:0007669"/>
    <property type="project" value="TreeGrafter"/>
</dbReference>
<dbReference type="GO" id="GO:0046872">
    <property type="term" value="F:metal ion binding"/>
    <property type="evidence" value="ECO:0007669"/>
    <property type="project" value="UniProtKB-KW"/>
</dbReference>
<dbReference type="GO" id="GO:0051287">
    <property type="term" value="F:NAD binding"/>
    <property type="evidence" value="ECO:0007669"/>
    <property type="project" value="InterPro"/>
</dbReference>
<dbReference type="GO" id="GO:0000105">
    <property type="term" value="P:L-histidine biosynthetic process"/>
    <property type="evidence" value="ECO:0007669"/>
    <property type="project" value="TreeGrafter"/>
</dbReference>
<dbReference type="CDD" id="cd06572">
    <property type="entry name" value="Histidinol_dh"/>
    <property type="match status" value="1"/>
</dbReference>
<dbReference type="FunFam" id="3.40.50.1980:FF:000001">
    <property type="entry name" value="Histidinol dehydrogenase"/>
    <property type="match status" value="1"/>
</dbReference>
<dbReference type="FunFam" id="3.40.50.1980:FF:000026">
    <property type="entry name" value="Histidinol dehydrogenase"/>
    <property type="match status" value="1"/>
</dbReference>
<dbReference type="Gene3D" id="1.20.5.1300">
    <property type="match status" value="1"/>
</dbReference>
<dbReference type="Gene3D" id="3.40.50.1980">
    <property type="entry name" value="Nitrogenase molybdenum iron protein domain"/>
    <property type="match status" value="2"/>
</dbReference>
<dbReference type="InterPro" id="IPR016161">
    <property type="entry name" value="Ald_DH/histidinol_DH"/>
</dbReference>
<dbReference type="InterPro" id="IPR001692">
    <property type="entry name" value="Histidinol_DH_CS"/>
</dbReference>
<dbReference type="InterPro" id="IPR012131">
    <property type="entry name" value="Hstdl_DH"/>
</dbReference>
<dbReference type="NCBIfam" id="TIGR00069">
    <property type="entry name" value="hisD"/>
    <property type="match status" value="1"/>
</dbReference>
<dbReference type="PANTHER" id="PTHR21256:SF14">
    <property type="entry name" value="HISTIDINOL DEHYDROGENASE"/>
    <property type="match status" value="1"/>
</dbReference>
<dbReference type="PANTHER" id="PTHR21256">
    <property type="entry name" value="HISTIDINOL DEHYDROGENASE HDH"/>
    <property type="match status" value="1"/>
</dbReference>
<dbReference type="Pfam" id="PF00815">
    <property type="entry name" value="Histidinol_dh"/>
    <property type="match status" value="1"/>
</dbReference>
<dbReference type="PRINTS" id="PR00083">
    <property type="entry name" value="HOLDHDRGNASE"/>
</dbReference>
<dbReference type="SUPFAM" id="SSF53720">
    <property type="entry name" value="ALDH-like"/>
    <property type="match status" value="1"/>
</dbReference>
<dbReference type="PROSITE" id="PS00611">
    <property type="entry name" value="HISOL_DEHYDROGENASE"/>
    <property type="match status" value="1"/>
</dbReference>
<proteinExistence type="inferred from homology"/>
<comment type="cofactor">
    <cofactor evidence="1">
        <name>Zn(2+)</name>
        <dbReference type="ChEBI" id="CHEBI:29105"/>
    </cofactor>
    <text evidence="1">Binds 1 zinc ion per subunit.</text>
</comment>
<comment type="similarity">
    <text evidence="3">Belongs to the histidinol dehydrogenase family.</text>
</comment>
<sequence length="500" mass="54015">MPPAGGIFHRPPTTRKSRRLTPRSACSNSTCSRTWGEQPWLLALHSIDSDRNAGRRPCKRRAIAMIRTIKSARGSVVNGGNGAMTSAVQTLLDQVEQGGDRAVRELSIRFDKFDRDSYRLTKAEIDACINSLTGREREDLDFAQDQIRNFAEAQRATLLDLEIETLPGVVLGHRNVPIQNVGCYVPGGKYPLLASAHMTVLTARVAGCERIITCAPPFQGKVAEKIVAAQALAGADEIYCLGGVQAIAAMAYGTETIAPVDMVAGPGNAYVAEAKRLLFGKVGIDLFAGPTETLVIADDSVDGELVATDLLGQAEHGVNSPAVLITNSEKLALDTVAEIGRLLTILPTAAIAAKAWEDFGEIILCETTKEMVAEADRLASEHVQVMTRDPDHFLNSMRNYGALFLGARTNVSFGDKVIGTNHTLPTNKAARYTGGLWVGKFLKTCTYQRILTDEASALIGEYGSRLSLMEGFVGHAEQSNIRVRRYGGRNVGYAMPVDPR</sequence>